<feature type="chain" id="PRO_1000074507" description="Alanine--tRNA ligase">
    <location>
        <begin position="1"/>
        <end position="923"/>
    </location>
</feature>
<feature type="binding site" evidence="1">
    <location>
        <position position="611"/>
    </location>
    <ligand>
        <name>Zn(2+)</name>
        <dbReference type="ChEBI" id="CHEBI:29105"/>
    </ligand>
</feature>
<feature type="binding site" evidence="1">
    <location>
        <position position="615"/>
    </location>
    <ligand>
        <name>Zn(2+)</name>
        <dbReference type="ChEBI" id="CHEBI:29105"/>
    </ligand>
</feature>
<feature type="binding site" evidence="1">
    <location>
        <position position="714"/>
    </location>
    <ligand>
        <name>Zn(2+)</name>
        <dbReference type="ChEBI" id="CHEBI:29105"/>
    </ligand>
</feature>
<feature type="binding site" evidence="1">
    <location>
        <position position="718"/>
    </location>
    <ligand>
        <name>Zn(2+)</name>
        <dbReference type="ChEBI" id="CHEBI:29105"/>
    </ligand>
</feature>
<sequence length="923" mass="103142">MLEDEYQLEFFKNNGFVRKQCQSCGKFFWTRDLDRKTCGDAPCDPYTFIGNPIFSREFDISQMREYYLSFFEEKGHTRINRYPVVARWRDDLYLTIASIADFQPFVTSGQVPPPANPLTISQPCIRLNDLDSVGRSGRHLTTFEMMAHHAFNKRDHEIYWKEHAMELCDELLTSLKLDPLAVSYKEEPWAGGGNAGPCVEVLVHGLELATLVFMDLKADKKGDVLIKGETYSKMDNYIVDTGYGLERFVWASKGSPTIYDALFPGIVNELMGLAGLEHELDNSEYANILAQNARLAGFMDVSEQSNLLELRKKVASSIGMTVDKLSAIMEPVEKVYAITDHTRCLTFMLGDGIIPSNVKAGYLARLVIRRTLRMMDDLDIRIPLSEIMDMHIKNMPEYPEFRENFPVIQDILVSEEEKFRNTMEKGRRIIQKSASHFKKTGEKIPLSQLTELYDSHGIPPEMAKEVASEIGVGVEFPDNFYSIIGELHNKAEEKEEEVVPFADRLKHLPKTKRSFYDEPTRLEFEAVVLDIFDNNIVLDNTFFYAEGGGQPADMGTIATAYAVYKVVDVQVYDGVIVHTIENPDGNLDIRKGDIVNGKVDEKRRMTLARHHTATHIVNDAARKVLGTHIWQAGAQKFEDHSRLDLSHYKHISPDELKQIELLANRMVMENKRVVTEWMSRTEAEQEYGFGLYQGGVPPGEKIRVVKVGDDVEACAGTHCVSTGVVGPIKILRTERIQDGVERVEFAAGVAAVRAMQKIDSLLSDSAKTLSVPPEQLPASVERFFGEWKDLKKENEKLKEEIARARVYRLLGGASEVAGLKVIAEFIPEADSLELQKTATELLKHEDVVTLLASDAEGVKLVASAGQKALSCGINAGSLVREMSKLVSGGGGGKPALAMGGGTDPSKIQDALARGLELVKEACK</sequence>
<name>SYA_METBF</name>
<comment type="function">
    <text evidence="1">Catalyzes the attachment of alanine to tRNA(Ala) in a two-step reaction: alanine is first activated by ATP to form Ala-AMP and then transferred to the acceptor end of tRNA(Ala). Also edits incorrectly charged Ser-tRNA(Ala) and Gly-tRNA(Ala) via its editing domain.</text>
</comment>
<comment type="catalytic activity">
    <reaction evidence="1">
        <text>tRNA(Ala) + L-alanine + ATP = L-alanyl-tRNA(Ala) + AMP + diphosphate</text>
        <dbReference type="Rhea" id="RHEA:12540"/>
        <dbReference type="Rhea" id="RHEA-COMP:9657"/>
        <dbReference type="Rhea" id="RHEA-COMP:9923"/>
        <dbReference type="ChEBI" id="CHEBI:30616"/>
        <dbReference type="ChEBI" id="CHEBI:33019"/>
        <dbReference type="ChEBI" id="CHEBI:57972"/>
        <dbReference type="ChEBI" id="CHEBI:78442"/>
        <dbReference type="ChEBI" id="CHEBI:78497"/>
        <dbReference type="ChEBI" id="CHEBI:456215"/>
        <dbReference type="EC" id="6.1.1.7"/>
    </reaction>
</comment>
<comment type="cofactor">
    <cofactor evidence="1">
        <name>Zn(2+)</name>
        <dbReference type="ChEBI" id="CHEBI:29105"/>
    </cofactor>
    <text evidence="1">Binds 1 zinc ion per subunit.</text>
</comment>
<comment type="subcellular location">
    <subcellularLocation>
        <location evidence="1">Cytoplasm</location>
    </subcellularLocation>
</comment>
<comment type="domain">
    <text evidence="1">Consists of three domains; the N-terminal catalytic domain, the editing domain and the C-terminal C-Ala domain. The editing domain removes incorrectly charged amino acids, while the C-Ala domain, along with tRNA(Ala), serves as a bridge to cooperatively bring together the editing and aminoacylation centers thus stimulating deacylation of misacylated tRNAs.</text>
</comment>
<comment type="similarity">
    <text evidence="1">Belongs to the class-II aminoacyl-tRNA synthetase family.</text>
</comment>
<keyword id="KW-0030">Aminoacyl-tRNA synthetase</keyword>
<keyword id="KW-0067">ATP-binding</keyword>
<keyword id="KW-0963">Cytoplasm</keyword>
<keyword id="KW-0436">Ligase</keyword>
<keyword id="KW-0479">Metal-binding</keyword>
<keyword id="KW-0547">Nucleotide-binding</keyword>
<keyword id="KW-0648">Protein biosynthesis</keyword>
<keyword id="KW-0694">RNA-binding</keyword>
<keyword id="KW-0820">tRNA-binding</keyword>
<keyword id="KW-0862">Zinc</keyword>
<reference key="1">
    <citation type="journal article" date="2006" name="J. Bacteriol.">
        <title>The Methanosarcina barkeri genome: comparative analysis with Methanosarcina acetivorans and Methanosarcina mazei reveals extensive rearrangement within methanosarcinal genomes.</title>
        <authorList>
            <person name="Maeder D.L."/>
            <person name="Anderson I."/>
            <person name="Brettin T.S."/>
            <person name="Bruce D.C."/>
            <person name="Gilna P."/>
            <person name="Han C.S."/>
            <person name="Lapidus A."/>
            <person name="Metcalf W.W."/>
            <person name="Saunders E."/>
            <person name="Tapia R."/>
            <person name="Sowers K.R."/>
        </authorList>
    </citation>
    <scope>NUCLEOTIDE SEQUENCE [LARGE SCALE GENOMIC DNA]</scope>
    <source>
        <strain>Fusaro / DSM 804</strain>
    </source>
</reference>
<gene>
    <name evidence="1" type="primary">alaS</name>
    <name type="ordered locus">Mbar_A1361</name>
</gene>
<accession>Q46CS0</accession>
<dbReference type="EC" id="6.1.1.7" evidence="1"/>
<dbReference type="EMBL" id="CP000099">
    <property type="protein sequence ID" value="AAZ70322.1"/>
    <property type="molecule type" value="Genomic_DNA"/>
</dbReference>
<dbReference type="SMR" id="Q46CS0"/>
<dbReference type="STRING" id="269797.Mbar_A1361"/>
<dbReference type="PaxDb" id="269797-Mbar_A1361"/>
<dbReference type="KEGG" id="mba:Mbar_A1361"/>
<dbReference type="eggNOG" id="arCOG01255">
    <property type="taxonomic scope" value="Archaea"/>
</dbReference>
<dbReference type="HOGENOM" id="CLU_004485_4_0_2"/>
<dbReference type="OrthoDB" id="7506at2157"/>
<dbReference type="GO" id="GO:0005737">
    <property type="term" value="C:cytoplasm"/>
    <property type="evidence" value="ECO:0007669"/>
    <property type="project" value="UniProtKB-SubCell"/>
</dbReference>
<dbReference type="GO" id="GO:0004813">
    <property type="term" value="F:alanine-tRNA ligase activity"/>
    <property type="evidence" value="ECO:0007669"/>
    <property type="project" value="UniProtKB-UniRule"/>
</dbReference>
<dbReference type="GO" id="GO:0002161">
    <property type="term" value="F:aminoacyl-tRNA deacylase activity"/>
    <property type="evidence" value="ECO:0007669"/>
    <property type="project" value="TreeGrafter"/>
</dbReference>
<dbReference type="GO" id="GO:0005524">
    <property type="term" value="F:ATP binding"/>
    <property type="evidence" value="ECO:0007669"/>
    <property type="project" value="UniProtKB-UniRule"/>
</dbReference>
<dbReference type="GO" id="GO:0000049">
    <property type="term" value="F:tRNA binding"/>
    <property type="evidence" value="ECO:0007669"/>
    <property type="project" value="UniProtKB-KW"/>
</dbReference>
<dbReference type="GO" id="GO:0008270">
    <property type="term" value="F:zinc ion binding"/>
    <property type="evidence" value="ECO:0007669"/>
    <property type="project" value="UniProtKB-UniRule"/>
</dbReference>
<dbReference type="GO" id="GO:0006419">
    <property type="term" value="P:alanyl-tRNA aminoacylation"/>
    <property type="evidence" value="ECO:0007669"/>
    <property type="project" value="UniProtKB-UniRule"/>
</dbReference>
<dbReference type="CDD" id="cd00673">
    <property type="entry name" value="AlaRS_core"/>
    <property type="match status" value="1"/>
</dbReference>
<dbReference type="FunFam" id="2.40.30.130:FF:000028">
    <property type="entry name" value="Alanine--tRNA ligase"/>
    <property type="match status" value="1"/>
</dbReference>
<dbReference type="FunFam" id="3.10.310.40:FF:000001">
    <property type="entry name" value="Alanine--tRNA ligase"/>
    <property type="match status" value="1"/>
</dbReference>
<dbReference type="FunFam" id="3.30.54.20:FF:000005">
    <property type="entry name" value="Alanine--tRNA ligase"/>
    <property type="match status" value="1"/>
</dbReference>
<dbReference type="FunFam" id="3.30.930.10:FF:000056">
    <property type="entry name" value="Alanine--tRNA ligase"/>
    <property type="match status" value="1"/>
</dbReference>
<dbReference type="FunFam" id="3.30.980.10:FF:000004">
    <property type="entry name" value="Alanine--tRNA ligase, cytoplasmic"/>
    <property type="match status" value="1"/>
</dbReference>
<dbReference type="Gene3D" id="2.40.30.130">
    <property type="match status" value="1"/>
</dbReference>
<dbReference type="Gene3D" id="3.10.310.40">
    <property type="match status" value="1"/>
</dbReference>
<dbReference type="Gene3D" id="3.30.54.20">
    <property type="match status" value="1"/>
</dbReference>
<dbReference type="Gene3D" id="6.10.250.550">
    <property type="match status" value="1"/>
</dbReference>
<dbReference type="Gene3D" id="3.30.930.10">
    <property type="entry name" value="Bira Bifunctional Protein, Domain 2"/>
    <property type="match status" value="1"/>
</dbReference>
<dbReference type="Gene3D" id="3.30.980.10">
    <property type="entry name" value="Threonyl-trna Synthetase, Chain A, domain 2"/>
    <property type="match status" value="1"/>
</dbReference>
<dbReference type="HAMAP" id="MF_00036_A">
    <property type="entry name" value="Ala_tRNA_synth_A"/>
    <property type="match status" value="1"/>
</dbReference>
<dbReference type="InterPro" id="IPR045864">
    <property type="entry name" value="aa-tRNA-synth_II/BPL/LPL"/>
</dbReference>
<dbReference type="InterPro" id="IPR002318">
    <property type="entry name" value="Ala-tRNA-lgiase_IIc"/>
</dbReference>
<dbReference type="InterPro" id="IPR018162">
    <property type="entry name" value="Ala-tRNA-ligase_IIc_anticod-bd"/>
</dbReference>
<dbReference type="InterPro" id="IPR018165">
    <property type="entry name" value="Ala-tRNA-synth_IIc_core"/>
</dbReference>
<dbReference type="InterPro" id="IPR018164">
    <property type="entry name" value="Ala-tRNA-synth_IIc_N"/>
</dbReference>
<dbReference type="InterPro" id="IPR022429">
    <property type="entry name" value="Ala-tRNA_lgiase_arc"/>
</dbReference>
<dbReference type="InterPro" id="IPR050058">
    <property type="entry name" value="Ala-tRNA_ligase"/>
</dbReference>
<dbReference type="InterPro" id="IPR003156">
    <property type="entry name" value="DHHA1_dom"/>
</dbReference>
<dbReference type="InterPro" id="IPR018163">
    <property type="entry name" value="Thr/Ala-tRNA-synth_IIc_edit"/>
</dbReference>
<dbReference type="InterPro" id="IPR009000">
    <property type="entry name" value="Transl_B-barrel_sf"/>
</dbReference>
<dbReference type="InterPro" id="IPR012947">
    <property type="entry name" value="tRNA_SAD"/>
</dbReference>
<dbReference type="NCBIfam" id="TIGR03683">
    <property type="entry name" value="A-tRNA_syn_arch"/>
    <property type="match status" value="1"/>
</dbReference>
<dbReference type="NCBIfam" id="TIGR00344">
    <property type="entry name" value="alaS"/>
    <property type="match status" value="1"/>
</dbReference>
<dbReference type="PANTHER" id="PTHR11777:SF9">
    <property type="entry name" value="ALANINE--TRNA LIGASE, CYTOPLASMIC"/>
    <property type="match status" value="1"/>
</dbReference>
<dbReference type="PANTHER" id="PTHR11777">
    <property type="entry name" value="ALANYL-TRNA SYNTHETASE"/>
    <property type="match status" value="1"/>
</dbReference>
<dbReference type="Pfam" id="PF02272">
    <property type="entry name" value="DHHA1"/>
    <property type="match status" value="1"/>
</dbReference>
<dbReference type="Pfam" id="PF01411">
    <property type="entry name" value="tRNA-synt_2c"/>
    <property type="match status" value="1"/>
</dbReference>
<dbReference type="Pfam" id="PF07973">
    <property type="entry name" value="tRNA_SAD"/>
    <property type="match status" value="1"/>
</dbReference>
<dbReference type="PRINTS" id="PR00980">
    <property type="entry name" value="TRNASYNTHALA"/>
</dbReference>
<dbReference type="SMART" id="SM00863">
    <property type="entry name" value="tRNA_SAD"/>
    <property type="match status" value="1"/>
</dbReference>
<dbReference type="SUPFAM" id="SSF55681">
    <property type="entry name" value="Class II aaRS and biotin synthetases"/>
    <property type="match status" value="1"/>
</dbReference>
<dbReference type="SUPFAM" id="SSF101353">
    <property type="entry name" value="Putative anticodon-binding domain of alanyl-tRNA synthetase (AlaRS)"/>
    <property type="match status" value="1"/>
</dbReference>
<dbReference type="SUPFAM" id="SSF55186">
    <property type="entry name" value="ThrRS/AlaRS common domain"/>
    <property type="match status" value="1"/>
</dbReference>
<dbReference type="SUPFAM" id="SSF50447">
    <property type="entry name" value="Translation proteins"/>
    <property type="match status" value="1"/>
</dbReference>
<dbReference type="PROSITE" id="PS50860">
    <property type="entry name" value="AA_TRNA_LIGASE_II_ALA"/>
    <property type="match status" value="1"/>
</dbReference>
<protein>
    <recommendedName>
        <fullName evidence="1">Alanine--tRNA ligase</fullName>
        <ecNumber evidence="1">6.1.1.7</ecNumber>
    </recommendedName>
    <alternativeName>
        <fullName evidence="1">Alanyl-tRNA synthetase</fullName>
        <shortName evidence="1">AlaRS</shortName>
    </alternativeName>
</protein>
<proteinExistence type="inferred from homology"/>
<organism>
    <name type="scientific">Methanosarcina barkeri (strain Fusaro / DSM 804)</name>
    <dbReference type="NCBI Taxonomy" id="269797"/>
    <lineage>
        <taxon>Archaea</taxon>
        <taxon>Methanobacteriati</taxon>
        <taxon>Methanobacteriota</taxon>
        <taxon>Stenosarchaea group</taxon>
        <taxon>Methanomicrobia</taxon>
        <taxon>Methanosarcinales</taxon>
        <taxon>Methanosarcinaceae</taxon>
        <taxon>Methanosarcina</taxon>
    </lineage>
</organism>
<evidence type="ECO:0000255" key="1">
    <source>
        <dbReference type="HAMAP-Rule" id="MF_00036"/>
    </source>
</evidence>